<reference key="1">
    <citation type="journal article" date="2002" name="Proc. Natl. Acad. Sci. U.S.A.">
        <title>Genome sequence of the hyperthermophilic crenarchaeon Pyrobaculum aerophilum.</title>
        <authorList>
            <person name="Fitz-Gibbon S.T."/>
            <person name="Ladner H."/>
            <person name="Kim U.-J."/>
            <person name="Stetter K.O."/>
            <person name="Simon M.I."/>
            <person name="Miller J.H."/>
        </authorList>
    </citation>
    <scope>NUCLEOTIDE SEQUENCE [LARGE SCALE GENOMIC DNA]</scope>
    <source>
        <strain>ATCC 51768 / DSM 7523 / JCM 9630 / CIP 104966 / NBRC 100827 / IM2</strain>
    </source>
</reference>
<gene>
    <name evidence="1" type="primary">amzA</name>
    <name type="ordered locus">PAE1990</name>
</gene>
<sequence length="155" mass="17476">MRPRITVVAPSRIKPLEIPEFTTIWQFKDIDISHFLDLARGQCRADKVVEALSNGVKSPTVYVLDCDGYYPGLNFVFGLAVPVLKTAVVFTARLVGPRFEERLVKEITHEAGHLYGLAHCANPSCVMYFSNSLLDTDRKSPYFCPKCRENLARIL</sequence>
<name>AMZA_PYRAE</name>
<proteinExistence type="inferred from homology"/>
<protein>
    <recommendedName>
        <fullName evidence="1">Archaemetzincin</fullName>
        <ecNumber evidence="1">3.4.-.-</ecNumber>
    </recommendedName>
</protein>
<accession>Q8ZW37</accession>
<keyword id="KW-0378">Hydrolase</keyword>
<keyword id="KW-0479">Metal-binding</keyword>
<keyword id="KW-0482">Metalloprotease</keyword>
<keyword id="KW-0645">Protease</keyword>
<keyword id="KW-1185">Reference proteome</keyword>
<keyword id="KW-0862">Zinc</keyword>
<comment type="function">
    <text evidence="1">Probable zinc metalloprotease whose natural substrate is unknown.</text>
</comment>
<comment type="cofactor">
    <cofactor evidence="1">
        <name>Zn(2+)</name>
        <dbReference type="ChEBI" id="CHEBI:29105"/>
    </cofactor>
    <text evidence="1">Binds 2 Zn(2+) ions per subunit. One is catalytic, whereas the other seems to have a structural role.</text>
</comment>
<comment type="subunit">
    <text evidence="1">Monomer.</text>
</comment>
<comment type="similarity">
    <text evidence="1">Belongs to the peptidase M54 family.</text>
</comment>
<dbReference type="EC" id="3.4.-.-" evidence="1"/>
<dbReference type="EMBL" id="AE009441">
    <property type="protein sequence ID" value="AAL63865.1"/>
    <property type="molecule type" value="Genomic_DNA"/>
</dbReference>
<dbReference type="RefSeq" id="WP_011008336.1">
    <property type="nucleotide sequence ID" value="NC_003364.1"/>
</dbReference>
<dbReference type="SMR" id="Q8ZW37"/>
<dbReference type="STRING" id="178306.PAE1990"/>
<dbReference type="EnsemblBacteria" id="AAL63865">
    <property type="protein sequence ID" value="AAL63865"/>
    <property type="gene ID" value="PAE1990"/>
</dbReference>
<dbReference type="GeneID" id="1464188"/>
<dbReference type="KEGG" id="pai:PAE1990"/>
<dbReference type="PATRIC" id="fig|178306.9.peg.1470"/>
<dbReference type="eggNOG" id="arCOG00458">
    <property type="taxonomic scope" value="Archaea"/>
</dbReference>
<dbReference type="HOGENOM" id="CLU_108521_1_0_2"/>
<dbReference type="InParanoid" id="Q8ZW37"/>
<dbReference type="Proteomes" id="UP000002439">
    <property type="component" value="Chromosome"/>
</dbReference>
<dbReference type="GO" id="GO:0008237">
    <property type="term" value="F:metallopeptidase activity"/>
    <property type="evidence" value="ECO:0007669"/>
    <property type="project" value="UniProtKB-UniRule"/>
</dbReference>
<dbReference type="GO" id="GO:0008270">
    <property type="term" value="F:zinc ion binding"/>
    <property type="evidence" value="ECO:0007669"/>
    <property type="project" value="UniProtKB-UniRule"/>
</dbReference>
<dbReference type="GO" id="GO:0006508">
    <property type="term" value="P:proteolysis"/>
    <property type="evidence" value="ECO:0007669"/>
    <property type="project" value="UniProtKB-UniRule"/>
</dbReference>
<dbReference type="CDD" id="cd11375">
    <property type="entry name" value="Peptidase_M54"/>
    <property type="match status" value="1"/>
</dbReference>
<dbReference type="Gene3D" id="3.40.390.10">
    <property type="entry name" value="Collagenase (Catalytic Domain)"/>
    <property type="match status" value="1"/>
</dbReference>
<dbReference type="HAMAP" id="MF_01842">
    <property type="entry name" value="Archaemetzincin"/>
    <property type="match status" value="1"/>
</dbReference>
<dbReference type="InterPro" id="IPR024079">
    <property type="entry name" value="MetalloPept_cat_dom_sf"/>
</dbReference>
<dbReference type="InterPro" id="IPR012962">
    <property type="entry name" value="Pept_M54_archaemetzincn"/>
</dbReference>
<dbReference type="InterPro" id="IPR012091">
    <property type="entry name" value="Pept_M54_archaemetzncn_arc/bac"/>
</dbReference>
<dbReference type="NCBIfam" id="NF033823">
    <property type="entry name" value="archmetzin"/>
    <property type="match status" value="1"/>
</dbReference>
<dbReference type="PANTHER" id="PTHR15910">
    <property type="entry name" value="ARCHAEMETZINCIN"/>
    <property type="match status" value="1"/>
</dbReference>
<dbReference type="PANTHER" id="PTHR15910:SF1">
    <property type="entry name" value="ARCHAEMETZINCIN-2"/>
    <property type="match status" value="1"/>
</dbReference>
<dbReference type="Pfam" id="PF07998">
    <property type="entry name" value="Peptidase_M54"/>
    <property type="match status" value="1"/>
</dbReference>
<dbReference type="PIRSF" id="PIRSF005785">
    <property type="entry name" value="Zn-prot_arch"/>
    <property type="match status" value="1"/>
</dbReference>
<dbReference type="SUPFAM" id="SSF55486">
    <property type="entry name" value="Metalloproteases ('zincins'), catalytic domain"/>
    <property type="match status" value="1"/>
</dbReference>
<evidence type="ECO:0000255" key="1">
    <source>
        <dbReference type="HAMAP-Rule" id="MF_01842"/>
    </source>
</evidence>
<feature type="chain" id="PRO_0000159631" description="Archaemetzincin">
    <location>
        <begin position="1"/>
        <end position="155"/>
    </location>
</feature>
<feature type="active site" description="Proton acceptor" evidence="1">
    <location>
        <position position="110"/>
    </location>
</feature>
<feature type="binding site" evidence="1">
    <location>
        <position position="109"/>
    </location>
    <ligand>
        <name>Zn(2+)</name>
        <dbReference type="ChEBI" id="CHEBI:29105"/>
        <label>1</label>
        <note>catalytic</note>
    </ligand>
</feature>
<feature type="binding site" evidence="1">
    <location>
        <position position="113"/>
    </location>
    <ligand>
        <name>Zn(2+)</name>
        <dbReference type="ChEBI" id="CHEBI:29105"/>
        <label>1</label>
        <note>catalytic</note>
    </ligand>
</feature>
<feature type="binding site" evidence="1">
    <location>
        <position position="119"/>
    </location>
    <ligand>
        <name>Zn(2+)</name>
        <dbReference type="ChEBI" id="CHEBI:29105"/>
        <label>1</label>
        <note>catalytic</note>
    </ligand>
</feature>
<feature type="binding site" evidence="1">
    <location>
        <position position="120"/>
    </location>
    <ligand>
        <name>Zn(2+)</name>
        <dbReference type="ChEBI" id="CHEBI:29105"/>
        <label>2</label>
    </ligand>
</feature>
<feature type="binding site" evidence="1">
    <location>
        <position position="125"/>
    </location>
    <ligand>
        <name>Zn(2+)</name>
        <dbReference type="ChEBI" id="CHEBI:29105"/>
        <label>2</label>
    </ligand>
</feature>
<feature type="binding site" evidence="1">
    <location>
        <position position="144"/>
    </location>
    <ligand>
        <name>Zn(2+)</name>
        <dbReference type="ChEBI" id="CHEBI:29105"/>
        <label>2</label>
    </ligand>
</feature>
<feature type="binding site" evidence="1">
    <location>
        <position position="147"/>
    </location>
    <ligand>
        <name>Zn(2+)</name>
        <dbReference type="ChEBI" id="CHEBI:29105"/>
        <label>2</label>
    </ligand>
</feature>
<organism>
    <name type="scientific">Pyrobaculum aerophilum (strain ATCC 51768 / DSM 7523 / JCM 9630 / CIP 104966 / NBRC 100827 / IM2)</name>
    <dbReference type="NCBI Taxonomy" id="178306"/>
    <lineage>
        <taxon>Archaea</taxon>
        <taxon>Thermoproteota</taxon>
        <taxon>Thermoprotei</taxon>
        <taxon>Thermoproteales</taxon>
        <taxon>Thermoproteaceae</taxon>
        <taxon>Pyrobaculum</taxon>
    </lineage>
</organism>